<accession>A1S4P3</accession>
<organism>
    <name type="scientific">Shewanella amazonensis (strain ATCC BAA-1098 / SB2B)</name>
    <dbReference type="NCBI Taxonomy" id="326297"/>
    <lineage>
        <taxon>Bacteria</taxon>
        <taxon>Pseudomonadati</taxon>
        <taxon>Pseudomonadota</taxon>
        <taxon>Gammaproteobacteria</taxon>
        <taxon>Alteromonadales</taxon>
        <taxon>Shewanellaceae</taxon>
        <taxon>Shewanella</taxon>
    </lineage>
</organism>
<comment type="function">
    <text evidence="1">Responsible for the release of ribosomes from messenger RNA at the termination of protein biosynthesis. May increase the efficiency of translation by recycling ribosomes from one round of translation to another.</text>
</comment>
<comment type="subcellular location">
    <subcellularLocation>
        <location evidence="1">Cytoplasm</location>
    </subcellularLocation>
</comment>
<comment type="similarity">
    <text evidence="1">Belongs to the RRF family.</text>
</comment>
<reference key="1">
    <citation type="submission" date="2006-12" db="EMBL/GenBank/DDBJ databases">
        <title>Complete sequence of Shewanella amazonensis SB2B.</title>
        <authorList>
            <consortium name="US DOE Joint Genome Institute"/>
            <person name="Copeland A."/>
            <person name="Lucas S."/>
            <person name="Lapidus A."/>
            <person name="Barry K."/>
            <person name="Detter J.C."/>
            <person name="Glavina del Rio T."/>
            <person name="Hammon N."/>
            <person name="Israni S."/>
            <person name="Dalin E."/>
            <person name="Tice H."/>
            <person name="Pitluck S."/>
            <person name="Munk A.C."/>
            <person name="Brettin T."/>
            <person name="Bruce D."/>
            <person name="Han C."/>
            <person name="Tapia R."/>
            <person name="Gilna P."/>
            <person name="Schmutz J."/>
            <person name="Larimer F."/>
            <person name="Land M."/>
            <person name="Hauser L."/>
            <person name="Kyrpides N."/>
            <person name="Mikhailova N."/>
            <person name="Fredrickson J."/>
            <person name="Richardson P."/>
        </authorList>
    </citation>
    <scope>NUCLEOTIDE SEQUENCE [LARGE SCALE GENOMIC DNA]</scope>
    <source>
        <strain>ATCC BAA-1098 / SB2B</strain>
    </source>
</reference>
<evidence type="ECO:0000255" key="1">
    <source>
        <dbReference type="HAMAP-Rule" id="MF_00040"/>
    </source>
</evidence>
<feature type="chain" id="PRO_1000003255" description="Ribosome-recycling factor">
    <location>
        <begin position="1"/>
        <end position="185"/>
    </location>
</feature>
<sequence length="185" mass="20790">MIEDIKKDAQDRMGKCVEATKAQMAKVRTGRAHPSLLDTIQVNYYGSMTPLKQVGNVTIEDSRTLAVNVFDRSAIQAVEKAIMSSDLGLNPMSAGATIRIPLPPLTEERRRDLVKVVRAEAEQGRVAIRNVRRDANSSFKQLEKEKECTEDDVRRSEEEVQKITDLHIKKIDELLAAKEAELMEV</sequence>
<name>RRF_SHEAM</name>
<protein>
    <recommendedName>
        <fullName evidence="1">Ribosome-recycling factor</fullName>
        <shortName evidence="1">RRF</shortName>
    </recommendedName>
    <alternativeName>
        <fullName evidence="1">Ribosome-releasing factor</fullName>
    </alternativeName>
</protein>
<dbReference type="EMBL" id="CP000507">
    <property type="protein sequence ID" value="ABL99349.1"/>
    <property type="molecule type" value="Genomic_DNA"/>
</dbReference>
<dbReference type="RefSeq" id="WP_011759258.1">
    <property type="nucleotide sequence ID" value="NC_008700.1"/>
</dbReference>
<dbReference type="SMR" id="A1S4P3"/>
<dbReference type="STRING" id="326297.Sama_1142"/>
<dbReference type="KEGG" id="saz:Sama_1142"/>
<dbReference type="eggNOG" id="COG0233">
    <property type="taxonomic scope" value="Bacteria"/>
</dbReference>
<dbReference type="HOGENOM" id="CLU_073981_2_1_6"/>
<dbReference type="OrthoDB" id="9804006at2"/>
<dbReference type="Proteomes" id="UP000009175">
    <property type="component" value="Chromosome"/>
</dbReference>
<dbReference type="GO" id="GO:0005829">
    <property type="term" value="C:cytosol"/>
    <property type="evidence" value="ECO:0007669"/>
    <property type="project" value="GOC"/>
</dbReference>
<dbReference type="GO" id="GO:0043023">
    <property type="term" value="F:ribosomal large subunit binding"/>
    <property type="evidence" value="ECO:0007669"/>
    <property type="project" value="TreeGrafter"/>
</dbReference>
<dbReference type="GO" id="GO:0002184">
    <property type="term" value="P:cytoplasmic translational termination"/>
    <property type="evidence" value="ECO:0007669"/>
    <property type="project" value="TreeGrafter"/>
</dbReference>
<dbReference type="CDD" id="cd00520">
    <property type="entry name" value="RRF"/>
    <property type="match status" value="1"/>
</dbReference>
<dbReference type="FunFam" id="1.10.132.20:FF:000001">
    <property type="entry name" value="Ribosome-recycling factor"/>
    <property type="match status" value="1"/>
</dbReference>
<dbReference type="FunFam" id="3.30.1360.40:FF:000001">
    <property type="entry name" value="Ribosome-recycling factor"/>
    <property type="match status" value="1"/>
</dbReference>
<dbReference type="Gene3D" id="3.30.1360.40">
    <property type="match status" value="1"/>
</dbReference>
<dbReference type="Gene3D" id="1.10.132.20">
    <property type="entry name" value="Ribosome-recycling factor"/>
    <property type="match status" value="1"/>
</dbReference>
<dbReference type="HAMAP" id="MF_00040">
    <property type="entry name" value="RRF"/>
    <property type="match status" value="1"/>
</dbReference>
<dbReference type="InterPro" id="IPR002661">
    <property type="entry name" value="Ribosome_recyc_fac"/>
</dbReference>
<dbReference type="InterPro" id="IPR023584">
    <property type="entry name" value="Ribosome_recyc_fac_dom"/>
</dbReference>
<dbReference type="InterPro" id="IPR036191">
    <property type="entry name" value="RRF_sf"/>
</dbReference>
<dbReference type="NCBIfam" id="TIGR00496">
    <property type="entry name" value="frr"/>
    <property type="match status" value="1"/>
</dbReference>
<dbReference type="PANTHER" id="PTHR20982:SF3">
    <property type="entry name" value="MITOCHONDRIAL RIBOSOME RECYCLING FACTOR PSEUDO 1"/>
    <property type="match status" value="1"/>
</dbReference>
<dbReference type="PANTHER" id="PTHR20982">
    <property type="entry name" value="RIBOSOME RECYCLING FACTOR"/>
    <property type="match status" value="1"/>
</dbReference>
<dbReference type="Pfam" id="PF01765">
    <property type="entry name" value="RRF"/>
    <property type="match status" value="1"/>
</dbReference>
<dbReference type="SUPFAM" id="SSF55194">
    <property type="entry name" value="Ribosome recycling factor, RRF"/>
    <property type="match status" value="1"/>
</dbReference>
<keyword id="KW-0963">Cytoplasm</keyword>
<keyword id="KW-0648">Protein biosynthesis</keyword>
<keyword id="KW-1185">Reference proteome</keyword>
<proteinExistence type="inferred from homology"/>
<gene>
    <name evidence="1" type="primary">frr</name>
    <name type="ordered locus">Sama_1142</name>
</gene>